<dbReference type="EC" id="6.3.2.9" evidence="1"/>
<dbReference type="EMBL" id="CP000319">
    <property type="protein sequence ID" value="ABE62102.1"/>
    <property type="molecule type" value="Genomic_DNA"/>
</dbReference>
<dbReference type="RefSeq" id="WP_011509794.1">
    <property type="nucleotide sequence ID" value="NC_007964.1"/>
</dbReference>
<dbReference type="SMR" id="Q1QNU5"/>
<dbReference type="STRING" id="323097.Nham_1277"/>
<dbReference type="KEGG" id="nha:Nham_1277"/>
<dbReference type="eggNOG" id="COG0771">
    <property type="taxonomic scope" value="Bacteria"/>
</dbReference>
<dbReference type="HOGENOM" id="CLU_032540_3_0_5"/>
<dbReference type="OrthoDB" id="9809796at2"/>
<dbReference type="UniPathway" id="UPA00219"/>
<dbReference type="Proteomes" id="UP000001953">
    <property type="component" value="Chromosome"/>
</dbReference>
<dbReference type="GO" id="GO:0005737">
    <property type="term" value="C:cytoplasm"/>
    <property type="evidence" value="ECO:0007669"/>
    <property type="project" value="UniProtKB-SubCell"/>
</dbReference>
<dbReference type="GO" id="GO:0005524">
    <property type="term" value="F:ATP binding"/>
    <property type="evidence" value="ECO:0007669"/>
    <property type="project" value="UniProtKB-UniRule"/>
</dbReference>
<dbReference type="GO" id="GO:0004326">
    <property type="term" value="F:tetrahydrofolylpolyglutamate synthase activity"/>
    <property type="evidence" value="ECO:0007669"/>
    <property type="project" value="InterPro"/>
</dbReference>
<dbReference type="GO" id="GO:0008764">
    <property type="term" value="F:UDP-N-acetylmuramoylalanine-D-glutamate ligase activity"/>
    <property type="evidence" value="ECO:0007669"/>
    <property type="project" value="UniProtKB-UniRule"/>
</dbReference>
<dbReference type="GO" id="GO:0051301">
    <property type="term" value="P:cell division"/>
    <property type="evidence" value="ECO:0007669"/>
    <property type="project" value="UniProtKB-KW"/>
</dbReference>
<dbReference type="GO" id="GO:0071555">
    <property type="term" value="P:cell wall organization"/>
    <property type="evidence" value="ECO:0007669"/>
    <property type="project" value="UniProtKB-KW"/>
</dbReference>
<dbReference type="GO" id="GO:0009252">
    <property type="term" value="P:peptidoglycan biosynthetic process"/>
    <property type="evidence" value="ECO:0007669"/>
    <property type="project" value="UniProtKB-UniRule"/>
</dbReference>
<dbReference type="GO" id="GO:0008360">
    <property type="term" value="P:regulation of cell shape"/>
    <property type="evidence" value="ECO:0007669"/>
    <property type="project" value="UniProtKB-KW"/>
</dbReference>
<dbReference type="Gene3D" id="3.90.190.20">
    <property type="entry name" value="Mur ligase, C-terminal domain"/>
    <property type="match status" value="1"/>
</dbReference>
<dbReference type="Gene3D" id="3.40.1190.10">
    <property type="entry name" value="Mur-like, catalytic domain"/>
    <property type="match status" value="1"/>
</dbReference>
<dbReference type="Gene3D" id="3.40.50.720">
    <property type="entry name" value="NAD(P)-binding Rossmann-like Domain"/>
    <property type="match status" value="1"/>
</dbReference>
<dbReference type="HAMAP" id="MF_00639">
    <property type="entry name" value="MurD"/>
    <property type="match status" value="1"/>
</dbReference>
<dbReference type="InterPro" id="IPR018109">
    <property type="entry name" value="Folylpolyglutamate_synth_CS"/>
</dbReference>
<dbReference type="InterPro" id="IPR036565">
    <property type="entry name" value="Mur-like_cat_sf"/>
</dbReference>
<dbReference type="InterPro" id="IPR004101">
    <property type="entry name" value="Mur_ligase_C"/>
</dbReference>
<dbReference type="InterPro" id="IPR036615">
    <property type="entry name" value="Mur_ligase_C_dom_sf"/>
</dbReference>
<dbReference type="InterPro" id="IPR013221">
    <property type="entry name" value="Mur_ligase_cen"/>
</dbReference>
<dbReference type="InterPro" id="IPR005762">
    <property type="entry name" value="MurD"/>
</dbReference>
<dbReference type="NCBIfam" id="TIGR01087">
    <property type="entry name" value="murD"/>
    <property type="match status" value="1"/>
</dbReference>
<dbReference type="PANTHER" id="PTHR43692">
    <property type="entry name" value="UDP-N-ACETYLMURAMOYLALANINE--D-GLUTAMATE LIGASE"/>
    <property type="match status" value="1"/>
</dbReference>
<dbReference type="PANTHER" id="PTHR43692:SF1">
    <property type="entry name" value="UDP-N-ACETYLMURAMOYLALANINE--D-GLUTAMATE LIGASE"/>
    <property type="match status" value="1"/>
</dbReference>
<dbReference type="Pfam" id="PF02875">
    <property type="entry name" value="Mur_ligase_C"/>
    <property type="match status" value="1"/>
</dbReference>
<dbReference type="Pfam" id="PF08245">
    <property type="entry name" value="Mur_ligase_M"/>
    <property type="match status" value="1"/>
</dbReference>
<dbReference type="SUPFAM" id="SSF51984">
    <property type="entry name" value="MurCD N-terminal domain"/>
    <property type="match status" value="1"/>
</dbReference>
<dbReference type="SUPFAM" id="SSF53623">
    <property type="entry name" value="MurD-like peptide ligases, catalytic domain"/>
    <property type="match status" value="1"/>
</dbReference>
<dbReference type="SUPFAM" id="SSF53244">
    <property type="entry name" value="MurD-like peptide ligases, peptide-binding domain"/>
    <property type="match status" value="1"/>
</dbReference>
<name>MURD_NITHX</name>
<gene>
    <name evidence="1" type="primary">murD</name>
    <name type="ordered locus">Nham_1277</name>
</gene>
<keyword id="KW-0067">ATP-binding</keyword>
<keyword id="KW-0131">Cell cycle</keyword>
<keyword id="KW-0132">Cell division</keyword>
<keyword id="KW-0133">Cell shape</keyword>
<keyword id="KW-0961">Cell wall biogenesis/degradation</keyword>
<keyword id="KW-0963">Cytoplasm</keyword>
<keyword id="KW-0436">Ligase</keyword>
<keyword id="KW-0547">Nucleotide-binding</keyword>
<keyword id="KW-0573">Peptidoglycan synthesis</keyword>
<keyword id="KW-1185">Reference proteome</keyword>
<protein>
    <recommendedName>
        <fullName evidence="1">UDP-N-acetylmuramoylalanine--D-glutamate ligase</fullName>
        <ecNumber evidence="1">6.3.2.9</ecNumber>
    </recommendedName>
    <alternativeName>
        <fullName evidence="1">D-glutamic acid-adding enzyme</fullName>
    </alternativeName>
    <alternativeName>
        <fullName evidence="1">UDP-N-acetylmuramoyl-L-alanyl-D-glutamate synthetase</fullName>
    </alternativeName>
</protein>
<proteinExistence type="inferred from homology"/>
<reference key="1">
    <citation type="submission" date="2006-03" db="EMBL/GenBank/DDBJ databases">
        <title>Complete sequence of chromosome of Nitrobacter hamburgensis X14.</title>
        <authorList>
            <consortium name="US DOE Joint Genome Institute"/>
            <person name="Copeland A."/>
            <person name="Lucas S."/>
            <person name="Lapidus A."/>
            <person name="Barry K."/>
            <person name="Detter J.C."/>
            <person name="Glavina del Rio T."/>
            <person name="Hammon N."/>
            <person name="Israni S."/>
            <person name="Dalin E."/>
            <person name="Tice H."/>
            <person name="Pitluck S."/>
            <person name="Chain P."/>
            <person name="Malfatti S."/>
            <person name="Shin M."/>
            <person name="Vergez L."/>
            <person name="Schmutz J."/>
            <person name="Larimer F."/>
            <person name="Land M."/>
            <person name="Hauser L."/>
            <person name="Kyrpides N."/>
            <person name="Ivanova N."/>
            <person name="Ward B."/>
            <person name="Arp D."/>
            <person name="Klotz M."/>
            <person name="Stein L."/>
            <person name="O'Mullan G."/>
            <person name="Starkenburg S."/>
            <person name="Sayavedra L."/>
            <person name="Poret-Peterson A.T."/>
            <person name="Gentry M.E."/>
            <person name="Bruce D."/>
            <person name="Richardson P."/>
        </authorList>
    </citation>
    <scope>NUCLEOTIDE SEQUENCE [LARGE SCALE GENOMIC DNA]</scope>
    <source>
        <strain>DSM 10229 / NCIMB 13809 / X14</strain>
    </source>
</reference>
<sequence>MIPVTSFAGKTVAVFGLGGSGLASCHALKAGGAEVIAGDDNADNLAKVAQAGFITADLRNVSWVNFAALVLAPGVPLTHPKPHWSVLAARQAGVEVIGDIELFCRERARHAPDAPFVAITGTNGKSTTTALVAHLMREAGHDVQMGGNIGTAILSLEPPRKGRVHVIEMSSYQIDLTPSLDPTVGILLNVSPDHLDRHGTIEHYAAVKERLIAAVQPHGTAVVGVDDIWSRTAADRIEQAGKRVVRVSVKRPLADGISVDHDRIVRASGGAQAEIADIGGIGSLRGRHNAQNAACASAAALALGVGRDILQQDLRSFPGLAHRMEQVGRKANVLFVNDSKGTNADATEKALSSFAEIFWIAGGKPKSGGIAPLAELFPRIRKAYLIGEAAEEFAGTLEGRVVYEISGTLEAAVPAAARDAEGSGLADAVVLLSPACASFDQFRNFEARGDRFRELVRALPGVTPVA</sequence>
<evidence type="ECO:0000255" key="1">
    <source>
        <dbReference type="HAMAP-Rule" id="MF_00639"/>
    </source>
</evidence>
<accession>Q1QNU5</accession>
<organism>
    <name type="scientific">Nitrobacter hamburgensis (strain DSM 10229 / NCIMB 13809 / X14)</name>
    <dbReference type="NCBI Taxonomy" id="323097"/>
    <lineage>
        <taxon>Bacteria</taxon>
        <taxon>Pseudomonadati</taxon>
        <taxon>Pseudomonadota</taxon>
        <taxon>Alphaproteobacteria</taxon>
        <taxon>Hyphomicrobiales</taxon>
        <taxon>Nitrobacteraceae</taxon>
        <taxon>Nitrobacter</taxon>
    </lineage>
</organism>
<feature type="chain" id="PRO_0000257206" description="UDP-N-acetylmuramoylalanine--D-glutamate ligase">
    <location>
        <begin position="1"/>
        <end position="466"/>
    </location>
</feature>
<feature type="binding site" evidence="1">
    <location>
        <begin position="121"/>
        <end position="127"/>
    </location>
    <ligand>
        <name>ATP</name>
        <dbReference type="ChEBI" id="CHEBI:30616"/>
    </ligand>
</feature>
<comment type="function">
    <text evidence="1">Cell wall formation. Catalyzes the addition of glutamate to the nucleotide precursor UDP-N-acetylmuramoyl-L-alanine (UMA).</text>
</comment>
<comment type="catalytic activity">
    <reaction evidence="1">
        <text>UDP-N-acetyl-alpha-D-muramoyl-L-alanine + D-glutamate + ATP = UDP-N-acetyl-alpha-D-muramoyl-L-alanyl-D-glutamate + ADP + phosphate + H(+)</text>
        <dbReference type="Rhea" id="RHEA:16429"/>
        <dbReference type="ChEBI" id="CHEBI:15378"/>
        <dbReference type="ChEBI" id="CHEBI:29986"/>
        <dbReference type="ChEBI" id="CHEBI:30616"/>
        <dbReference type="ChEBI" id="CHEBI:43474"/>
        <dbReference type="ChEBI" id="CHEBI:83898"/>
        <dbReference type="ChEBI" id="CHEBI:83900"/>
        <dbReference type="ChEBI" id="CHEBI:456216"/>
        <dbReference type="EC" id="6.3.2.9"/>
    </reaction>
</comment>
<comment type="pathway">
    <text evidence="1">Cell wall biogenesis; peptidoglycan biosynthesis.</text>
</comment>
<comment type="subcellular location">
    <subcellularLocation>
        <location evidence="1">Cytoplasm</location>
    </subcellularLocation>
</comment>
<comment type="similarity">
    <text evidence="1">Belongs to the MurCDEF family.</text>
</comment>